<sequence length="63" mass="7204">MPKMKTVRGAAKRFKVGKNKIKRGSAFRSHILTKMSQTRKRDLRGPQFVDKTNVAAVKKMLCK</sequence>
<keyword id="KW-1185">Reference proteome</keyword>
<keyword id="KW-0687">Ribonucleoprotein</keyword>
<keyword id="KW-0689">Ribosomal protein</keyword>
<comment type="similarity">
    <text evidence="1">Belongs to the bacterial ribosomal protein bL35 family.</text>
</comment>
<protein>
    <recommendedName>
        <fullName evidence="1">Large ribosomal subunit protein bL35</fullName>
    </recommendedName>
    <alternativeName>
        <fullName evidence="2">50S ribosomal protein L35</fullName>
    </alternativeName>
</protein>
<accession>A7I0P0</accession>
<evidence type="ECO:0000255" key="1">
    <source>
        <dbReference type="HAMAP-Rule" id="MF_00514"/>
    </source>
</evidence>
<evidence type="ECO:0000305" key="2"/>
<proteinExistence type="inferred from homology"/>
<feature type="chain" id="PRO_1000050675" description="Large ribosomal subunit protein bL35">
    <location>
        <begin position="1"/>
        <end position="63"/>
    </location>
</feature>
<gene>
    <name evidence="1" type="primary">rpmI</name>
    <name type="ordered locus">CHAB381_0493</name>
</gene>
<name>RL35_CAMHC</name>
<organism>
    <name type="scientific">Campylobacter hominis (strain ATCC BAA-381 / DSM 21671 / CCUG 45161 / LMG 19568 / NCTC 13146 / CH001A)</name>
    <dbReference type="NCBI Taxonomy" id="360107"/>
    <lineage>
        <taxon>Bacteria</taxon>
        <taxon>Pseudomonadati</taxon>
        <taxon>Campylobacterota</taxon>
        <taxon>Epsilonproteobacteria</taxon>
        <taxon>Campylobacterales</taxon>
        <taxon>Campylobacteraceae</taxon>
        <taxon>Campylobacter</taxon>
    </lineage>
</organism>
<reference key="1">
    <citation type="submission" date="2007-07" db="EMBL/GenBank/DDBJ databases">
        <title>Complete genome sequence of Campylobacter hominis ATCC BAA-381, a commensal isolated from the human gastrointestinal tract.</title>
        <authorList>
            <person name="Fouts D.E."/>
            <person name="Mongodin E.F."/>
            <person name="Puiu D."/>
            <person name="Sebastian Y."/>
            <person name="Miller W.G."/>
            <person name="Mandrell R.E."/>
            <person name="Nelson K.E."/>
        </authorList>
    </citation>
    <scope>NUCLEOTIDE SEQUENCE [LARGE SCALE GENOMIC DNA]</scope>
    <source>
        <strain>ATCC BAA-381 / DSM 21671 / CCUG 45161 / LMG 19568 / NCTC 13146 / CH001A</strain>
    </source>
</reference>
<dbReference type="EMBL" id="CP000776">
    <property type="protein sequence ID" value="ABS52075.1"/>
    <property type="molecule type" value="Genomic_DNA"/>
</dbReference>
<dbReference type="RefSeq" id="WP_012108366.1">
    <property type="nucleotide sequence ID" value="NC_009714.1"/>
</dbReference>
<dbReference type="SMR" id="A7I0P0"/>
<dbReference type="STRING" id="360107.CHAB381_0493"/>
<dbReference type="KEGG" id="cha:CHAB381_0493"/>
<dbReference type="eggNOG" id="COG0291">
    <property type="taxonomic scope" value="Bacteria"/>
</dbReference>
<dbReference type="HOGENOM" id="CLU_169643_1_2_7"/>
<dbReference type="OrthoDB" id="9804851at2"/>
<dbReference type="Proteomes" id="UP000002407">
    <property type="component" value="Chromosome"/>
</dbReference>
<dbReference type="GO" id="GO:0022625">
    <property type="term" value="C:cytosolic large ribosomal subunit"/>
    <property type="evidence" value="ECO:0007669"/>
    <property type="project" value="TreeGrafter"/>
</dbReference>
<dbReference type="GO" id="GO:0003735">
    <property type="term" value="F:structural constituent of ribosome"/>
    <property type="evidence" value="ECO:0007669"/>
    <property type="project" value="InterPro"/>
</dbReference>
<dbReference type="GO" id="GO:0006412">
    <property type="term" value="P:translation"/>
    <property type="evidence" value="ECO:0007669"/>
    <property type="project" value="UniProtKB-UniRule"/>
</dbReference>
<dbReference type="FunFam" id="4.10.410.60:FF:000001">
    <property type="entry name" value="50S ribosomal protein L35"/>
    <property type="match status" value="1"/>
</dbReference>
<dbReference type="Gene3D" id="4.10.410.60">
    <property type="match status" value="1"/>
</dbReference>
<dbReference type="HAMAP" id="MF_00514">
    <property type="entry name" value="Ribosomal_bL35"/>
    <property type="match status" value="1"/>
</dbReference>
<dbReference type="InterPro" id="IPR001706">
    <property type="entry name" value="Ribosomal_bL35"/>
</dbReference>
<dbReference type="InterPro" id="IPR021137">
    <property type="entry name" value="Ribosomal_bL35-like"/>
</dbReference>
<dbReference type="InterPro" id="IPR018265">
    <property type="entry name" value="Ribosomal_bL35_CS"/>
</dbReference>
<dbReference type="InterPro" id="IPR037229">
    <property type="entry name" value="Ribosomal_bL35_sf"/>
</dbReference>
<dbReference type="NCBIfam" id="TIGR00001">
    <property type="entry name" value="rpmI_bact"/>
    <property type="match status" value="1"/>
</dbReference>
<dbReference type="PANTHER" id="PTHR33343">
    <property type="entry name" value="54S RIBOSOMAL PROTEIN BL35M"/>
    <property type="match status" value="1"/>
</dbReference>
<dbReference type="PANTHER" id="PTHR33343:SF1">
    <property type="entry name" value="LARGE RIBOSOMAL SUBUNIT PROTEIN BL35M"/>
    <property type="match status" value="1"/>
</dbReference>
<dbReference type="Pfam" id="PF01632">
    <property type="entry name" value="Ribosomal_L35p"/>
    <property type="match status" value="1"/>
</dbReference>
<dbReference type="PRINTS" id="PR00064">
    <property type="entry name" value="RIBOSOMALL35"/>
</dbReference>
<dbReference type="SUPFAM" id="SSF143034">
    <property type="entry name" value="L35p-like"/>
    <property type="match status" value="1"/>
</dbReference>
<dbReference type="PROSITE" id="PS00936">
    <property type="entry name" value="RIBOSOMAL_L35"/>
    <property type="match status" value="1"/>
</dbReference>